<accession>Q8ZP17</accession>
<sequence length="432" mass="47883">MRVVILGSGVVGVTSAWYLSQAGHDVTVIDRESGPAQETSAANAGQISPGYAAPWAAPGVPLKAIKWMFQRHAPLAVRLDGTPFQLKWMWQMLRNCDTRHYMENKGRMVRLAEYSRDCLKTLRAATGIEYEGRQGGTLQLFRTAQQYENATRDIAVLEDAGVPYQLLESSRLAEVEPALAEVAHKLTGGLRLPNDETGDCQLFTQRLARMAEQAGVTFRFNTPVEKLLYENDQIYGVKCADEIIKADAYVMAFGSYSTAMLKGIVDIPVYPLKGYSLTIPIVEPDGAPVSTILDETYKIAITRFDKRIRVGGMAEIVGFNTDLLQPRRETLEMVVRDLFPRGGHIEQATFWTGLRPMTPDGTPVVGRTRYKNLWLNTGHGTLGWTMACGSGQLLSDILSGRTPAIPYDDLSVARYRSDFTPTPPQRLHSAHN</sequence>
<organism>
    <name type="scientific">Salmonella typhimurium (strain LT2 / SGSC1412 / ATCC 700720)</name>
    <dbReference type="NCBI Taxonomy" id="99287"/>
    <lineage>
        <taxon>Bacteria</taxon>
        <taxon>Pseudomonadati</taxon>
        <taxon>Pseudomonadota</taxon>
        <taxon>Gammaproteobacteria</taxon>
        <taxon>Enterobacterales</taxon>
        <taxon>Enterobacteriaceae</taxon>
        <taxon>Salmonella</taxon>
    </lineage>
</organism>
<gene>
    <name evidence="2" type="primary">dadA</name>
    <name type="ordered locus">STM1803</name>
</gene>
<proteinExistence type="inferred from homology"/>
<dbReference type="EC" id="1.4.99.-" evidence="2"/>
<dbReference type="EMBL" id="AE006468">
    <property type="protein sequence ID" value="AAL20718.1"/>
    <property type="molecule type" value="Genomic_DNA"/>
</dbReference>
<dbReference type="RefSeq" id="NP_460759.1">
    <property type="nucleotide sequence ID" value="NC_003197.2"/>
</dbReference>
<dbReference type="RefSeq" id="WP_001266937.1">
    <property type="nucleotide sequence ID" value="NC_003197.2"/>
</dbReference>
<dbReference type="SMR" id="Q8ZP17"/>
<dbReference type="STRING" id="99287.STM1803"/>
<dbReference type="PaxDb" id="99287-STM1803"/>
<dbReference type="DNASU" id="1253322"/>
<dbReference type="GeneID" id="1253322"/>
<dbReference type="KEGG" id="stm:STM1803"/>
<dbReference type="PATRIC" id="fig|99287.12.peg.1902"/>
<dbReference type="HOGENOM" id="CLU_007884_9_2_6"/>
<dbReference type="OMA" id="YSITFKM"/>
<dbReference type="PhylomeDB" id="Q8ZP17"/>
<dbReference type="BioCyc" id="SENT99287:STM1803-MONOMER"/>
<dbReference type="UniPathway" id="UPA00043">
    <property type="reaction ID" value="UER00498"/>
</dbReference>
<dbReference type="Proteomes" id="UP000001014">
    <property type="component" value="Chromosome"/>
</dbReference>
<dbReference type="GO" id="GO:0005737">
    <property type="term" value="C:cytoplasm"/>
    <property type="evidence" value="ECO:0000318"/>
    <property type="project" value="GO_Central"/>
</dbReference>
<dbReference type="GO" id="GO:0005886">
    <property type="term" value="C:plasma membrane"/>
    <property type="evidence" value="ECO:0000318"/>
    <property type="project" value="GO_Central"/>
</dbReference>
<dbReference type="GO" id="GO:0008718">
    <property type="term" value="F:D-amino-acid dehydrogenase activity"/>
    <property type="evidence" value="ECO:0000318"/>
    <property type="project" value="GO_Central"/>
</dbReference>
<dbReference type="GO" id="GO:0055130">
    <property type="term" value="P:D-alanine catabolic process"/>
    <property type="evidence" value="ECO:0000318"/>
    <property type="project" value="GO_Central"/>
</dbReference>
<dbReference type="FunFam" id="3.50.50.60:FF:000020">
    <property type="entry name" value="D-amino acid dehydrogenase"/>
    <property type="match status" value="1"/>
</dbReference>
<dbReference type="Gene3D" id="3.30.9.10">
    <property type="entry name" value="D-Amino Acid Oxidase, subunit A, domain 2"/>
    <property type="match status" value="1"/>
</dbReference>
<dbReference type="Gene3D" id="3.50.50.60">
    <property type="entry name" value="FAD/NAD(P)-binding domain"/>
    <property type="match status" value="2"/>
</dbReference>
<dbReference type="HAMAP" id="MF_01202">
    <property type="entry name" value="DadA"/>
    <property type="match status" value="1"/>
</dbReference>
<dbReference type="InterPro" id="IPR023080">
    <property type="entry name" value="DadA"/>
</dbReference>
<dbReference type="InterPro" id="IPR006076">
    <property type="entry name" value="FAD-dep_OxRdtase"/>
</dbReference>
<dbReference type="InterPro" id="IPR036188">
    <property type="entry name" value="FAD/NAD-bd_sf"/>
</dbReference>
<dbReference type="NCBIfam" id="NF001933">
    <property type="entry name" value="PRK00711.1"/>
    <property type="match status" value="1"/>
</dbReference>
<dbReference type="PANTHER" id="PTHR13847:SF280">
    <property type="entry name" value="D-AMINO ACID DEHYDROGENASE"/>
    <property type="match status" value="1"/>
</dbReference>
<dbReference type="PANTHER" id="PTHR13847">
    <property type="entry name" value="SARCOSINE DEHYDROGENASE-RELATED"/>
    <property type="match status" value="1"/>
</dbReference>
<dbReference type="Pfam" id="PF01266">
    <property type="entry name" value="DAO"/>
    <property type="match status" value="1"/>
</dbReference>
<dbReference type="SUPFAM" id="SSF54373">
    <property type="entry name" value="FAD-linked reductases, C-terminal domain"/>
    <property type="match status" value="1"/>
</dbReference>
<dbReference type="SUPFAM" id="SSF51905">
    <property type="entry name" value="FAD/NAD(P)-binding domain"/>
    <property type="match status" value="1"/>
</dbReference>
<evidence type="ECO:0000250" key="1"/>
<evidence type="ECO:0000255" key="2">
    <source>
        <dbReference type="HAMAP-Rule" id="MF_01202"/>
    </source>
</evidence>
<comment type="function">
    <text evidence="2">Oxidative deamination of D-amino acids.</text>
</comment>
<comment type="catalytic activity">
    <reaction evidence="2">
        <text>a D-alpha-amino acid + A + H2O = a 2-oxocarboxylate + AH2 + NH4(+)</text>
        <dbReference type="Rhea" id="RHEA:18125"/>
        <dbReference type="ChEBI" id="CHEBI:13193"/>
        <dbReference type="ChEBI" id="CHEBI:15377"/>
        <dbReference type="ChEBI" id="CHEBI:17499"/>
        <dbReference type="ChEBI" id="CHEBI:28938"/>
        <dbReference type="ChEBI" id="CHEBI:35179"/>
        <dbReference type="ChEBI" id="CHEBI:59871"/>
    </reaction>
</comment>
<comment type="cofactor">
    <cofactor evidence="2">
        <name>FAD</name>
        <dbReference type="ChEBI" id="CHEBI:57692"/>
    </cofactor>
</comment>
<comment type="pathway">
    <text>Amino-acid degradation; D-alanine degradation; NH(3) and pyruvate from D-alanine: step 1/1.</text>
</comment>
<comment type="subcellular location">
    <subcellularLocation>
        <location evidence="1">Cell inner membrane</location>
        <topology evidence="1">Peripheral membrane protein</topology>
    </subcellularLocation>
</comment>
<comment type="similarity">
    <text evidence="2">Belongs to the DadA oxidoreductase family.</text>
</comment>
<protein>
    <recommendedName>
        <fullName evidence="2">D-amino acid dehydrogenase</fullName>
        <ecNumber evidence="2">1.4.99.-</ecNumber>
    </recommendedName>
</protein>
<name>DADA_SALTY</name>
<keyword id="KW-0997">Cell inner membrane</keyword>
<keyword id="KW-1003">Cell membrane</keyword>
<keyword id="KW-0274">FAD</keyword>
<keyword id="KW-0285">Flavoprotein</keyword>
<keyword id="KW-0472">Membrane</keyword>
<keyword id="KW-0560">Oxidoreductase</keyword>
<keyword id="KW-1185">Reference proteome</keyword>
<reference key="1">
    <citation type="journal article" date="2001" name="Nature">
        <title>Complete genome sequence of Salmonella enterica serovar Typhimurium LT2.</title>
        <authorList>
            <person name="McClelland M."/>
            <person name="Sanderson K.E."/>
            <person name="Spieth J."/>
            <person name="Clifton S.W."/>
            <person name="Latreille P."/>
            <person name="Courtney L."/>
            <person name="Porwollik S."/>
            <person name="Ali J."/>
            <person name="Dante M."/>
            <person name="Du F."/>
            <person name="Hou S."/>
            <person name="Layman D."/>
            <person name="Leonard S."/>
            <person name="Nguyen C."/>
            <person name="Scott K."/>
            <person name="Holmes A."/>
            <person name="Grewal N."/>
            <person name="Mulvaney E."/>
            <person name="Ryan E."/>
            <person name="Sun H."/>
            <person name="Florea L."/>
            <person name="Miller W."/>
            <person name="Stoneking T."/>
            <person name="Nhan M."/>
            <person name="Waterston R."/>
            <person name="Wilson R.K."/>
        </authorList>
    </citation>
    <scope>NUCLEOTIDE SEQUENCE [LARGE SCALE GENOMIC DNA]</scope>
    <source>
        <strain>LT2 / SGSC1412 / ATCC 700720</strain>
    </source>
</reference>
<feature type="chain" id="PRO_0000166150" description="D-amino acid dehydrogenase">
    <location>
        <begin position="1"/>
        <end position="432"/>
    </location>
</feature>
<feature type="binding site" evidence="2">
    <location>
        <begin position="3"/>
        <end position="17"/>
    </location>
    <ligand>
        <name>FAD</name>
        <dbReference type="ChEBI" id="CHEBI:57692"/>
    </ligand>
</feature>